<sequence length="143" mass="14945">MAKKIIGFIKLQVPAGKANPSPPIGPALGQRGLNIMEFCKAFNAQTQGVEPGMPIPVVITAFADKSFTFVMKTPPATYLIKKAASITKGSAKANTDKVGKITRAQAEEIATTKRPDLTAADMDAAVRTIAGSARSMGITVEGL</sequence>
<evidence type="ECO:0000255" key="1">
    <source>
        <dbReference type="HAMAP-Rule" id="MF_00736"/>
    </source>
</evidence>
<evidence type="ECO:0000305" key="2"/>
<proteinExistence type="inferred from homology"/>
<name>RL11_HERAR</name>
<reference key="1">
    <citation type="journal article" date="2007" name="PLoS Genet.">
        <title>A tale of two oxidation states: bacterial colonization of arsenic-rich environments.</title>
        <authorList>
            <person name="Muller D."/>
            <person name="Medigue C."/>
            <person name="Koechler S."/>
            <person name="Barbe V."/>
            <person name="Barakat M."/>
            <person name="Talla E."/>
            <person name="Bonnefoy V."/>
            <person name="Krin E."/>
            <person name="Arsene-Ploetze F."/>
            <person name="Carapito C."/>
            <person name="Chandler M."/>
            <person name="Cournoyer B."/>
            <person name="Cruveiller S."/>
            <person name="Dossat C."/>
            <person name="Duval S."/>
            <person name="Heymann M."/>
            <person name="Leize E."/>
            <person name="Lieutaud A."/>
            <person name="Lievremont D."/>
            <person name="Makita Y."/>
            <person name="Mangenot S."/>
            <person name="Nitschke W."/>
            <person name="Ortet P."/>
            <person name="Perdrial N."/>
            <person name="Schoepp B."/>
            <person name="Siguier P."/>
            <person name="Simeonova D.D."/>
            <person name="Rouy Z."/>
            <person name="Segurens B."/>
            <person name="Turlin E."/>
            <person name="Vallenet D."/>
            <person name="van Dorsselaer A."/>
            <person name="Weiss S."/>
            <person name="Weissenbach J."/>
            <person name="Lett M.-C."/>
            <person name="Danchin A."/>
            <person name="Bertin P.N."/>
        </authorList>
    </citation>
    <scope>NUCLEOTIDE SEQUENCE [LARGE SCALE GENOMIC DNA]</scope>
    <source>
        <strain>ULPAs1</strain>
    </source>
</reference>
<comment type="function">
    <text evidence="1">Forms part of the ribosomal stalk which helps the ribosome interact with GTP-bound translation factors.</text>
</comment>
<comment type="subunit">
    <text evidence="1">Part of the ribosomal stalk of the 50S ribosomal subunit. Interacts with L10 and the large rRNA to form the base of the stalk. L10 forms an elongated spine to which L12 dimers bind in a sequential fashion forming a multimeric L10(L12)X complex.</text>
</comment>
<comment type="PTM">
    <text evidence="1">One or more lysine residues are methylated.</text>
</comment>
<comment type="similarity">
    <text evidence="1">Belongs to the universal ribosomal protein uL11 family.</text>
</comment>
<accession>A4G9U9</accession>
<gene>
    <name evidence="1" type="primary">rplK</name>
    <name type="ordered locus">HEAR3177</name>
</gene>
<protein>
    <recommendedName>
        <fullName evidence="1">Large ribosomal subunit protein uL11</fullName>
    </recommendedName>
    <alternativeName>
        <fullName evidence="2">50S ribosomal protein L11</fullName>
    </alternativeName>
</protein>
<dbReference type="EMBL" id="CU207211">
    <property type="protein sequence ID" value="CAL63286.1"/>
    <property type="molecule type" value="Genomic_DNA"/>
</dbReference>
<dbReference type="SMR" id="A4G9U9"/>
<dbReference type="STRING" id="204773.HEAR3177"/>
<dbReference type="KEGG" id="har:HEAR3177"/>
<dbReference type="eggNOG" id="COG0080">
    <property type="taxonomic scope" value="Bacteria"/>
</dbReference>
<dbReference type="HOGENOM" id="CLU_074237_2_0_4"/>
<dbReference type="OrthoDB" id="9802408at2"/>
<dbReference type="Proteomes" id="UP000006697">
    <property type="component" value="Chromosome"/>
</dbReference>
<dbReference type="GO" id="GO:0022625">
    <property type="term" value="C:cytosolic large ribosomal subunit"/>
    <property type="evidence" value="ECO:0007669"/>
    <property type="project" value="TreeGrafter"/>
</dbReference>
<dbReference type="GO" id="GO:0070180">
    <property type="term" value="F:large ribosomal subunit rRNA binding"/>
    <property type="evidence" value="ECO:0007669"/>
    <property type="project" value="UniProtKB-UniRule"/>
</dbReference>
<dbReference type="GO" id="GO:0003735">
    <property type="term" value="F:structural constituent of ribosome"/>
    <property type="evidence" value="ECO:0007669"/>
    <property type="project" value="InterPro"/>
</dbReference>
<dbReference type="GO" id="GO:0006412">
    <property type="term" value="P:translation"/>
    <property type="evidence" value="ECO:0007669"/>
    <property type="project" value="UniProtKB-UniRule"/>
</dbReference>
<dbReference type="CDD" id="cd00349">
    <property type="entry name" value="Ribosomal_L11"/>
    <property type="match status" value="1"/>
</dbReference>
<dbReference type="FunFam" id="1.10.10.250:FF:000001">
    <property type="entry name" value="50S ribosomal protein L11"/>
    <property type="match status" value="1"/>
</dbReference>
<dbReference type="FunFam" id="3.30.1550.10:FF:000001">
    <property type="entry name" value="50S ribosomal protein L11"/>
    <property type="match status" value="1"/>
</dbReference>
<dbReference type="Gene3D" id="1.10.10.250">
    <property type="entry name" value="Ribosomal protein L11, C-terminal domain"/>
    <property type="match status" value="1"/>
</dbReference>
<dbReference type="Gene3D" id="3.30.1550.10">
    <property type="entry name" value="Ribosomal protein L11/L12, N-terminal domain"/>
    <property type="match status" value="1"/>
</dbReference>
<dbReference type="HAMAP" id="MF_00736">
    <property type="entry name" value="Ribosomal_uL11"/>
    <property type="match status" value="1"/>
</dbReference>
<dbReference type="InterPro" id="IPR000911">
    <property type="entry name" value="Ribosomal_uL11"/>
</dbReference>
<dbReference type="InterPro" id="IPR006519">
    <property type="entry name" value="Ribosomal_uL11_bac-typ"/>
</dbReference>
<dbReference type="InterPro" id="IPR020783">
    <property type="entry name" value="Ribosomal_uL11_C"/>
</dbReference>
<dbReference type="InterPro" id="IPR036769">
    <property type="entry name" value="Ribosomal_uL11_C_sf"/>
</dbReference>
<dbReference type="InterPro" id="IPR020785">
    <property type="entry name" value="Ribosomal_uL11_CS"/>
</dbReference>
<dbReference type="InterPro" id="IPR020784">
    <property type="entry name" value="Ribosomal_uL11_N"/>
</dbReference>
<dbReference type="InterPro" id="IPR036796">
    <property type="entry name" value="Ribosomal_uL11_N_sf"/>
</dbReference>
<dbReference type="NCBIfam" id="TIGR01632">
    <property type="entry name" value="L11_bact"/>
    <property type="match status" value="1"/>
</dbReference>
<dbReference type="PANTHER" id="PTHR11661">
    <property type="entry name" value="60S RIBOSOMAL PROTEIN L12"/>
    <property type="match status" value="1"/>
</dbReference>
<dbReference type="PANTHER" id="PTHR11661:SF1">
    <property type="entry name" value="LARGE RIBOSOMAL SUBUNIT PROTEIN UL11M"/>
    <property type="match status" value="1"/>
</dbReference>
<dbReference type="Pfam" id="PF00298">
    <property type="entry name" value="Ribosomal_L11"/>
    <property type="match status" value="1"/>
</dbReference>
<dbReference type="Pfam" id="PF03946">
    <property type="entry name" value="Ribosomal_L11_N"/>
    <property type="match status" value="1"/>
</dbReference>
<dbReference type="SMART" id="SM00649">
    <property type="entry name" value="RL11"/>
    <property type="match status" value="1"/>
</dbReference>
<dbReference type="SUPFAM" id="SSF54747">
    <property type="entry name" value="Ribosomal L11/L12e N-terminal domain"/>
    <property type="match status" value="1"/>
</dbReference>
<dbReference type="SUPFAM" id="SSF46906">
    <property type="entry name" value="Ribosomal protein L11, C-terminal domain"/>
    <property type="match status" value="1"/>
</dbReference>
<dbReference type="PROSITE" id="PS00359">
    <property type="entry name" value="RIBOSOMAL_L11"/>
    <property type="match status" value="1"/>
</dbReference>
<keyword id="KW-0488">Methylation</keyword>
<keyword id="KW-1185">Reference proteome</keyword>
<keyword id="KW-0687">Ribonucleoprotein</keyword>
<keyword id="KW-0689">Ribosomal protein</keyword>
<keyword id="KW-0694">RNA-binding</keyword>
<keyword id="KW-0699">rRNA-binding</keyword>
<feature type="chain" id="PRO_1000046191" description="Large ribosomal subunit protein uL11">
    <location>
        <begin position="1"/>
        <end position="143"/>
    </location>
</feature>
<organism>
    <name type="scientific">Herminiimonas arsenicoxydans</name>
    <dbReference type="NCBI Taxonomy" id="204773"/>
    <lineage>
        <taxon>Bacteria</taxon>
        <taxon>Pseudomonadati</taxon>
        <taxon>Pseudomonadota</taxon>
        <taxon>Betaproteobacteria</taxon>
        <taxon>Burkholderiales</taxon>
        <taxon>Oxalobacteraceae</taxon>
        <taxon>Herminiimonas</taxon>
    </lineage>
</organism>